<feature type="chain" id="PRO_0000194046" description="Transcription initiation factor IIA subunit 2">
    <location>
        <begin position="1"/>
        <end position="111"/>
    </location>
</feature>
<dbReference type="EMBL" id="AF220549">
    <property type="protein sequence ID" value="AAF61068.1"/>
    <property type="molecule type" value="mRNA"/>
</dbReference>
<dbReference type="RefSeq" id="XP_019967396.1">
    <property type="nucleotide sequence ID" value="XM_020111837.2"/>
</dbReference>
<dbReference type="SMR" id="Q9IA78"/>
<dbReference type="GeneID" id="109646123"/>
<dbReference type="KEGG" id="pov:109646123"/>
<dbReference type="CTD" id="2958"/>
<dbReference type="OrthoDB" id="549655at7898"/>
<dbReference type="GO" id="GO:0005672">
    <property type="term" value="C:transcription factor TFIIA complex"/>
    <property type="evidence" value="ECO:0007669"/>
    <property type="project" value="InterPro"/>
</dbReference>
<dbReference type="GO" id="GO:0006367">
    <property type="term" value="P:transcription initiation at RNA polymerase II promoter"/>
    <property type="evidence" value="ECO:0007669"/>
    <property type="project" value="InterPro"/>
</dbReference>
<dbReference type="CDD" id="cd10014">
    <property type="entry name" value="TFIIA_gamma_C"/>
    <property type="match status" value="1"/>
</dbReference>
<dbReference type="CDD" id="cd10145">
    <property type="entry name" value="TFIIA_gamma_N"/>
    <property type="match status" value="1"/>
</dbReference>
<dbReference type="FunFam" id="1.10.287.190:FF:000001">
    <property type="entry name" value="Transcription initiation factor IIA subunit 2"/>
    <property type="match status" value="1"/>
</dbReference>
<dbReference type="FunFam" id="2.30.18.10:FF:000001">
    <property type="entry name" value="Transcription initiation factor IIA subunit 2"/>
    <property type="match status" value="1"/>
</dbReference>
<dbReference type="Gene3D" id="2.30.18.10">
    <property type="entry name" value="Transcription factor IIA (TFIIA), beta-barrel domain"/>
    <property type="match status" value="1"/>
</dbReference>
<dbReference type="Gene3D" id="1.10.287.190">
    <property type="entry name" value="Transcription factor IIA gamma subunit, alpha-helical domain"/>
    <property type="match status" value="1"/>
</dbReference>
<dbReference type="InterPro" id="IPR009083">
    <property type="entry name" value="TFIIA_a-hlx"/>
</dbReference>
<dbReference type="InterPro" id="IPR009088">
    <property type="entry name" value="TFIIA_b-brl"/>
</dbReference>
<dbReference type="InterPro" id="IPR003194">
    <property type="entry name" value="TFIIA_gsu"/>
</dbReference>
<dbReference type="InterPro" id="IPR015871">
    <property type="entry name" value="TFIIA_gsu_C"/>
</dbReference>
<dbReference type="InterPro" id="IPR015872">
    <property type="entry name" value="TFIIA_gsu_N"/>
</dbReference>
<dbReference type="PANTHER" id="PTHR10966">
    <property type="entry name" value="TRANSCRIPTION INITIATION FACTOR IIA SUBUNIT 2"/>
    <property type="match status" value="1"/>
</dbReference>
<dbReference type="Pfam" id="PF02751">
    <property type="entry name" value="TFIIA_gamma_C"/>
    <property type="match status" value="1"/>
</dbReference>
<dbReference type="Pfam" id="PF02268">
    <property type="entry name" value="TFIIA_gamma_N"/>
    <property type="match status" value="1"/>
</dbReference>
<dbReference type="PIRSF" id="PIRSF009415">
    <property type="entry name" value="Hum_TFIIA_gamma"/>
    <property type="match status" value="1"/>
</dbReference>
<dbReference type="SUPFAM" id="SSF47396">
    <property type="entry name" value="Transcription factor IIA (TFIIA), alpha-helical domain"/>
    <property type="match status" value="1"/>
</dbReference>
<dbReference type="SUPFAM" id="SSF50784">
    <property type="entry name" value="Transcription factor IIA (TFIIA), beta-barrel domain"/>
    <property type="match status" value="1"/>
</dbReference>
<name>T2AG_PAROL</name>
<reference key="1">
    <citation type="submission" date="2000-01" db="EMBL/GenBank/DDBJ databases">
        <title>Japanese flounder muscle mRNA similar to TFIIA P12 subunit.</title>
        <authorList>
            <person name="Lee J."/>
            <person name="Jeon J."/>
            <person name="Song Y."/>
        </authorList>
    </citation>
    <scope>NUCLEOTIDE SEQUENCE [MRNA]</scope>
    <source>
        <tissue>Muscle</tissue>
    </source>
</reference>
<organism>
    <name type="scientific">Paralichthys olivaceus</name>
    <name type="common">Bastard halibut</name>
    <name type="synonym">Hippoglossus olivaceus</name>
    <dbReference type="NCBI Taxonomy" id="8255"/>
    <lineage>
        <taxon>Eukaryota</taxon>
        <taxon>Metazoa</taxon>
        <taxon>Chordata</taxon>
        <taxon>Craniata</taxon>
        <taxon>Vertebrata</taxon>
        <taxon>Euteleostomi</taxon>
        <taxon>Actinopterygii</taxon>
        <taxon>Neopterygii</taxon>
        <taxon>Teleostei</taxon>
        <taxon>Neoteleostei</taxon>
        <taxon>Acanthomorphata</taxon>
        <taxon>Carangaria</taxon>
        <taxon>Pleuronectiformes</taxon>
        <taxon>Pleuronectoidei</taxon>
        <taxon>Paralichthyidae</taxon>
        <taxon>Paralichthys</taxon>
    </lineage>
</organism>
<comment type="function">
    <text evidence="1">TFIIA is a component of the transcription machinery of RNA polymerase II and plays an important role in transcriptional activation. TFIIA in a complex with TBP mediates transcriptional activity (By similarity).</text>
</comment>
<comment type="subunit">
    <text evidence="1">TFIIA is a heterodimer of the large unprocessed subunit 1 and a small subunit gamma. It was originally believed to be a heterotrimer of an alpha, a beta and a gamma subunit. Interacts with NCOA6 general coactivator. TFIIA forms a complex with TBP (By similarity).</text>
</comment>
<comment type="subcellular location">
    <subcellularLocation>
        <location>Nucleus</location>
    </subcellularLocation>
</comment>
<comment type="similarity">
    <text evidence="2">Belongs to the TFIIA subunit 2 family.</text>
</comment>
<proteinExistence type="inferred from homology"/>
<gene>
    <name type="primary">gtf2a2</name>
</gene>
<sequence>MAYQLYRNTTLGNSLQESLDELIQTQQITPQLALQVLLQFDKAINTALASRVRNRVNFRGSLNTYRFCDNVWTFVLNDVEFREVTDLVKVDKVKIVACDGKSESTQNKSDK</sequence>
<keyword id="KW-0539">Nucleus</keyword>
<keyword id="KW-0804">Transcription</keyword>
<keyword id="KW-0805">Transcription regulation</keyword>
<evidence type="ECO:0000250" key="1"/>
<evidence type="ECO:0000305" key="2"/>
<protein>
    <recommendedName>
        <fullName>Transcription initiation factor IIA subunit 2</fullName>
    </recommendedName>
    <alternativeName>
        <fullName>General transcription factor IIA subunit 2</fullName>
    </alternativeName>
    <alternativeName>
        <fullName>Transcription initiation factor IIA gamma chain</fullName>
        <shortName>TFIIA-gamma</shortName>
    </alternativeName>
</protein>
<accession>Q9IA78</accession>